<accession>C4ZRQ9</accession>
<reference key="1">
    <citation type="journal article" date="2009" name="J. Bacteriol.">
        <title>Genomic sequencing reveals regulatory mutations and recombinational events in the widely used MC4100 lineage of Escherichia coli K-12.</title>
        <authorList>
            <person name="Ferenci T."/>
            <person name="Zhou Z."/>
            <person name="Betteridge T."/>
            <person name="Ren Y."/>
            <person name="Liu Y."/>
            <person name="Feng L."/>
            <person name="Reeves P.R."/>
            <person name="Wang L."/>
        </authorList>
    </citation>
    <scope>NUCLEOTIDE SEQUENCE [LARGE SCALE GENOMIC DNA]</scope>
    <source>
        <strain>K12 / MC4100 / BW2952</strain>
    </source>
</reference>
<comment type="function">
    <text evidence="1">Modifies, by uridylylation and deuridylylation, the PII regulatory proteins (GlnB and homologs), in response to the nitrogen status of the cell that GlnD senses through the glutamine level. Under low glutamine levels, catalyzes the conversion of the PII proteins and UTP to PII-UMP and PPi, while under higher glutamine levels, GlnD hydrolyzes PII-UMP to PII and UMP (deuridylylation). Thus, controls uridylylation state and activity of the PII proteins, and plays an important role in the regulation of nitrogen assimilation and metabolism.</text>
</comment>
<comment type="catalytic activity">
    <reaction evidence="1">
        <text>[protein-PII]-L-tyrosine + UTP = [protein-PII]-uridylyl-L-tyrosine + diphosphate</text>
        <dbReference type="Rhea" id="RHEA:13673"/>
        <dbReference type="Rhea" id="RHEA-COMP:12147"/>
        <dbReference type="Rhea" id="RHEA-COMP:12148"/>
        <dbReference type="ChEBI" id="CHEBI:33019"/>
        <dbReference type="ChEBI" id="CHEBI:46398"/>
        <dbReference type="ChEBI" id="CHEBI:46858"/>
        <dbReference type="ChEBI" id="CHEBI:90602"/>
        <dbReference type="EC" id="2.7.7.59"/>
    </reaction>
</comment>
<comment type="catalytic activity">
    <reaction evidence="1">
        <text>[protein-PII]-uridylyl-L-tyrosine + H2O = [protein-PII]-L-tyrosine + UMP + H(+)</text>
        <dbReference type="Rhea" id="RHEA:48600"/>
        <dbReference type="Rhea" id="RHEA-COMP:12147"/>
        <dbReference type="Rhea" id="RHEA-COMP:12148"/>
        <dbReference type="ChEBI" id="CHEBI:15377"/>
        <dbReference type="ChEBI" id="CHEBI:15378"/>
        <dbReference type="ChEBI" id="CHEBI:46858"/>
        <dbReference type="ChEBI" id="CHEBI:57865"/>
        <dbReference type="ChEBI" id="CHEBI:90602"/>
    </reaction>
</comment>
<comment type="cofactor">
    <cofactor evidence="1">
        <name>Mg(2+)</name>
        <dbReference type="ChEBI" id="CHEBI:18420"/>
    </cofactor>
</comment>
<comment type="activity regulation">
    <text evidence="1">Uridylyltransferase (UTase) activity is inhibited by glutamine, while glutamine activates uridylyl-removing (UR) activity.</text>
</comment>
<comment type="domain">
    <text evidence="1">Has four distinct domains: an N-terminal nucleotidyltransferase (NT) domain responsible for UTase activity, a central HD domain that encodes UR activity, and two C-terminal ACT domains that seem to have a role in glutamine sensing.</text>
</comment>
<comment type="similarity">
    <text evidence="1">Belongs to the GlnD family.</text>
</comment>
<name>GLND_ECOBW</name>
<keyword id="KW-0378">Hydrolase</keyword>
<keyword id="KW-0460">Magnesium</keyword>
<keyword id="KW-0511">Multifunctional enzyme</keyword>
<keyword id="KW-0548">Nucleotidyltransferase</keyword>
<keyword id="KW-0677">Repeat</keyword>
<keyword id="KW-0808">Transferase</keyword>
<sequence length="890" mass="102390">MNTLPEQYANTALPTLPGQPQNPCVWPRDELTVGGIKAHIDTFQRWLGDAFDNGISAEQLIEARTEFIDQLLQRLWIEAGFSQIADLALVAVGGYGRGELHPLSDVDLLILSRKKLPDDQAQKVGELLTLLWDVKLEVGHSVRTLEECMLEGLSDLTVATNLIESRLLIGDVALFLELQKHIFSEGFWPSDKFYAAKVEEQNQRHQRYHGTSYNLEPDIKSSPGGLRDIHTLQWVARRHFGATSLDEMVGFGFLTSAERAELNECLHILWRIRFALHLVVSRYDNRLLFDRQLSVAQRLNYSGEGNEPVERMMKDYFRVTRRVSELNQMLLQLFDEAILALPADEKPRPIDDEFQLRGTLIDLRDETLFMRQPEAILRMFYTMVHNSAITGIYSTTLRQLRHARRHLQQPLCNIPEARKLFLSILRHPGAVRRGLLPMHRHSVLGAYMPQWSHIVGQMQFDLFHAYTVDEHTIRVMLKLESFASEETRQRHPLCVDVWPRLPSTELIFIAALFHDIAKGRGGDHSILGAQDVVHFAELHGLNSRETQLVAWLVRQHLLMSVTAQRRDIQDPEVIKQFAEEVQTENRLRYLVCLTVADICATNETLWNSWKQSLLRELYFATEKQLRRGMQNTPDMRERVRHHQLQALALLRMDNIDEEALHQIWSRCRANYFVRHSPNQLAWHARHLLQHDLSKPLVLLSPQATRGGTEIFIWSPDRPYLFAAVCAELDRRNLSVHDAQIFTTRDGMAMDTFIVLEPDGNPLSADRHEVIRFGLEQVLTQSSWQPPQPRRQPAKLRHFTVETEVTFLPTHTDRKSFLELIALDQPGLLARVGKIFADLGISLHGARITTIGERVEDLFIIATADRRALNNELQQEVHQRLTEALNPNDKG</sequence>
<dbReference type="EC" id="2.7.7.59" evidence="1"/>
<dbReference type="EC" id="3.1.4.-" evidence="1"/>
<dbReference type="EMBL" id="CP001396">
    <property type="protein sequence ID" value="ACR65772.1"/>
    <property type="molecule type" value="Genomic_DNA"/>
</dbReference>
<dbReference type="RefSeq" id="WP_001094586.1">
    <property type="nucleotide sequence ID" value="NC_012759.1"/>
</dbReference>
<dbReference type="SMR" id="C4ZRQ9"/>
<dbReference type="KEGG" id="ebw:BWG_0159"/>
<dbReference type="HOGENOM" id="CLU_012833_0_0_6"/>
<dbReference type="GO" id="GO:0008773">
    <property type="term" value="F:[protein-PII] uridylyltransferase activity"/>
    <property type="evidence" value="ECO:0007669"/>
    <property type="project" value="UniProtKB-UniRule"/>
</dbReference>
<dbReference type="GO" id="GO:0008081">
    <property type="term" value="F:phosphoric diester hydrolase activity"/>
    <property type="evidence" value="ECO:0007669"/>
    <property type="project" value="UniProtKB-UniRule"/>
</dbReference>
<dbReference type="GO" id="GO:0006808">
    <property type="term" value="P:regulation of nitrogen utilization"/>
    <property type="evidence" value="ECO:0007669"/>
    <property type="project" value="UniProtKB-UniRule"/>
</dbReference>
<dbReference type="CDD" id="cd04899">
    <property type="entry name" value="ACT_ACR-UUR-like_2"/>
    <property type="match status" value="1"/>
</dbReference>
<dbReference type="CDD" id="cd04900">
    <property type="entry name" value="ACT_UUR-like_1"/>
    <property type="match status" value="1"/>
</dbReference>
<dbReference type="CDD" id="cd00077">
    <property type="entry name" value="HDc"/>
    <property type="match status" value="1"/>
</dbReference>
<dbReference type="CDD" id="cd05401">
    <property type="entry name" value="NT_GlnE_GlnD_like"/>
    <property type="match status" value="1"/>
</dbReference>
<dbReference type="FunFam" id="1.10.3210.10:FF:000005">
    <property type="entry name" value="Bifunctional uridylyltransferase/uridylyl-removing enzyme"/>
    <property type="match status" value="1"/>
</dbReference>
<dbReference type="Gene3D" id="1.10.3210.10">
    <property type="entry name" value="Hypothetical protein af1432"/>
    <property type="match status" value="1"/>
</dbReference>
<dbReference type="HAMAP" id="MF_00277">
    <property type="entry name" value="PII_uridylyl_transf"/>
    <property type="match status" value="1"/>
</dbReference>
<dbReference type="InterPro" id="IPR045865">
    <property type="entry name" value="ACT-like_dom_sf"/>
</dbReference>
<dbReference type="InterPro" id="IPR002912">
    <property type="entry name" value="ACT_dom"/>
</dbReference>
<dbReference type="InterPro" id="IPR003607">
    <property type="entry name" value="HD/PDEase_dom"/>
</dbReference>
<dbReference type="InterPro" id="IPR006674">
    <property type="entry name" value="HD_domain"/>
</dbReference>
<dbReference type="InterPro" id="IPR043519">
    <property type="entry name" value="NT_sf"/>
</dbReference>
<dbReference type="InterPro" id="IPR013546">
    <property type="entry name" value="PII_UdlTrfase/GS_AdlTrfase"/>
</dbReference>
<dbReference type="InterPro" id="IPR002934">
    <property type="entry name" value="Polymerase_NTP_transf_dom"/>
</dbReference>
<dbReference type="InterPro" id="IPR010043">
    <property type="entry name" value="UTase/UR"/>
</dbReference>
<dbReference type="NCBIfam" id="NF002487">
    <property type="entry name" value="PRK01759.1"/>
    <property type="match status" value="1"/>
</dbReference>
<dbReference type="NCBIfam" id="NF003448">
    <property type="entry name" value="PRK05007.1"/>
    <property type="match status" value="1"/>
</dbReference>
<dbReference type="NCBIfam" id="TIGR01693">
    <property type="entry name" value="UTase_glnD"/>
    <property type="match status" value="1"/>
</dbReference>
<dbReference type="PANTHER" id="PTHR47320">
    <property type="entry name" value="BIFUNCTIONAL URIDYLYLTRANSFERASE/URIDYLYL-REMOVING ENZYME"/>
    <property type="match status" value="1"/>
</dbReference>
<dbReference type="PANTHER" id="PTHR47320:SF1">
    <property type="entry name" value="BIFUNCTIONAL URIDYLYLTRANSFERASE_URIDYLYL-REMOVING ENZYME"/>
    <property type="match status" value="1"/>
</dbReference>
<dbReference type="Pfam" id="PF01842">
    <property type="entry name" value="ACT"/>
    <property type="match status" value="2"/>
</dbReference>
<dbReference type="Pfam" id="PF08335">
    <property type="entry name" value="GlnD_UR_UTase"/>
    <property type="match status" value="1"/>
</dbReference>
<dbReference type="Pfam" id="PF01966">
    <property type="entry name" value="HD"/>
    <property type="match status" value="1"/>
</dbReference>
<dbReference type="Pfam" id="PF01909">
    <property type="entry name" value="NTP_transf_2"/>
    <property type="match status" value="1"/>
</dbReference>
<dbReference type="PIRSF" id="PIRSF006288">
    <property type="entry name" value="PII_uridyltransf"/>
    <property type="match status" value="1"/>
</dbReference>
<dbReference type="SMART" id="SM00471">
    <property type="entry name" value="HDc"/>
    <property type="match status" value="1"/>
</dbReference>
<dbReference type="SUPFAM" id="SSF55021">
    <property type="entry name" value="ACT-like"/>
    <property type="match status" value="2"/>
</dbReference>
<dbReference type="SUPFAM" id="SSF109604">
    <property type="entry name" value="HD-domain/PDEase-like"/>
    <property type="match status" value="1"/>
</dbReference>
<dbReference type="SUPFAM" id="SSF81301">
    <property type="entry name" value="Nucleotidyltransferase"/>
    <property type="match status" value="1"/>
</dbReference>
<dbReference type="SUPFAM" id="SSF81593">
    <property type="entry name" value="Nucleotidyltransferase substrate binding subunit/domain"/>
    <property type="match status" value="1"/>
</dbReference>
<dbReference type="PROSITE" id="PS51671">
    <property type="entry name" value="ACT"/>
    <property type="match status" value="2"/>
</dbReference>
<dbReference type="PROSITE" id="PS51831">
    <property type="entry name" value="HD"/>
    <property type="match status" value="1"/>
</dbReference>
<gene>
    <name evidence="1" type="primary">glnD</name>
    <name type="ordered locus">BWG_0159</name>
</gene>
<protein>
    <recommendedName>
        <fullName evidence="1">Bifunctional uridylyltransferase/uridylyl-removing enzyme</fullName>
        <shortName evidence="1">UTase/UR</shortName>
    </recommendedName>
    <alternativeName>
        <fullName evidence="1">Bifunctional [protein-PII] modification enzyme</fullName>
    </alternativeName>
    <alternativeName>
        <fullName evidence="1">Bifunctional nitrogen sensor protein</fullName>
    </alternativeName>
    <domain>
        <recommendedName>
            <fullName evidence="1">[Protein-PII] uridylyltransferase</fullName>
            <shortName evidence="1">PII uridylyltransferase</shortName>
            <shortName evidence="1">UTase</shortName>
            <ecNumber evidence="1">2.7.7.59</ecNumber>
        </recommendedName>
    </domain>
    <domain>
        <recommendedName>
            <fullName evidence="1">[Protein-PII]-UMP uridylyl-removing enzyme</fullName>
            <shortName evidence="1">UR</shortName>
            <ecNumber evidence="1">3.1.4.-</ecNumber>
        </recommendedName>
    </domain>
</protein>
<evidence type="ECO:0000255" key="1">
    <source>
        <dbReference type="HAMAP-Rule" id="MF_00277"/>
    </source>
</evidence>
<evidence type="ECO:0000255" key="2">
    <source>
        <dbReference type="PROSITE-ProRule" id="PRU01175"/>
    </source>
</evidence>
<proteinExistence type="inferred from homology"/>
<organism>
    <name type="scientific">Escherichia coli (strain K12 / MC4100 / BW2952)</name>
    <dbReference type="NCBI Taxonomy" id="595496"/>
    <lineage>
        <taxon>Bacteria</taxon>
        <taxon>Pseudomonadati</taxon>
        <taxon>Pseudomonadota</taxon>
        <taxon>Gammaproteobacteria</taxon>
        <taxon>Enterobacterales</taxon>
        <taxon>Enterobacteriaceae</taxon>
        <taxon>Escherichia</taxon>
    </lineage>
</organism>
<feature type="chain" id="PRO_1000204798" description="Bifunctional uridylyltransferase/uridylyl-removing enzyme">
    <location>
        <begin position="1"/>
        <end position="890"/>
    </location>
</feature>
<feature type="domain" description="HD" evidence="2">
    <location>
        <begin position="468"/>
        <end position="590"/>
    </location>
</feature>
<feature type="domain" description="ACT 1" evidence="1">
    <location>
        <begin position="709"/>
        <end position="789"/>
    </location>
</feature>
<feature type="domain" description="ACT 2" evidence="1">
    <location>
        <begin position="816"/>
        <end position="890"/>
    </location>
</feature>
<feature type="region of interest" description="Uridylyltransferase">
    <location>
        <begin position="1"/>
        <end position="349"/>
    </location>
</feature>
<feature type="region of interest" description="Uridylyl-removing">
    <location>
        <begin position="350"/>
        <end position="708"/>
    </location>
</feature>